<sequence length="547" mass="62272">MTRLQRLFRIAWVFCRYRLDTFLPLSELPTPLKIFFLLAPWHLFPQPKLSRGDRLRLALEELGPVFVKFGQILSTRRDLLPDDMAESLKQLQDRVPPFPSEQARGIIEKSLGAPVSELFAEFSPDPMASASVAQVHAATLPNGQKVVVKVLRPGIEKVIRQDLGLMYLMAGLLEKYWSEGKRLHPVEVVADYDSTIHDELDLQREAANASQLRRNFENSPLIYIPFIDWDYTRKSVLVMERIHGIPIADVPALEKAGVNMRVLAEKGVEIFFTQVFRDSFFHADMHPGNIFVDVSNPADPKYIAIDFGIVGTLAPDDQSYLARNLLAFFRRDYRQVAQLHIQSGWVPPETRVNEFEAAIRTVCEPIFERPLKDISFGHFLLRLFQTARRFNMEVQPQLVLLQKTLLNVEGLGRQLYPDLDLWSTAQPFLEDWMRKRIGPSGLIKSLQNHLPSWLEQSPEMPQLVHDALLQIRSSGPTEAQNRATLALMKEQQLRSERRWRRGFIALVLAGAALVGSQPHAGQWLADLPVWSWALLAGAAGVMLRGSR</sequence>
<accession>A1U669</accession>
<reference key="1">
    <citation type="journal article" date="2011" name="Appl. Environ. Microbiol.">
        <title>Genomic potential of Marinobacter aquaeolei, a biogeochemical 'opportunitroph'.</title>
        <authorList>
            <person name="Singer E."/>
            <person name="Webb E.A."/>
            <person name="Nelson W.C."/>
            <person name="Heidelberg J.F."/>
            <person name="Ivanova N."/>
            <person name="Pati A."/>
            <person name="Edwards K.J."/>
        </authorList>
    </citation>
    <scope>NUCLEOTIDE SEQUENCE [LARGE SCALE GENOMIC DNA]</scope>
    <source>
        <strain>ATCC 700491 / DSM 11845 / VT8</strain>
    </source>
</reference>
<evidence type="ECO:0000255" key="1">
    <source>
        <dbReference type="HAMAP-Rule" id="MF_00414"/>
    </source>
</evidence>
<feature type="chain" id="PRO_1000050046" description="Probable protein kinase UbiB">
    <location>
        <begin position="1"/>
        <end position="547"/>
    </location>
</feature>
<feature type="transmembrane region" description="Helical" evidence="1">
    <location>
        <begin position="502"/>
        <end position="522"/>
    </location>
</feature>
<feature type="transmembrane region" description="Helical" evidence="1">
    <location>
        <begin position="523"/>
        <end position="543"/>
    </location>
</feature>
<feature type="domain" description="Protein kinase" evidence="1">
    <location>
        <begin position="121"/>
        <end position="501"/>
    </location>
</feature>
<feature type="active site" description="Proton acceptor" evidence="1">
    <location>
        <position position="284"/>
    </location>
</feature>
<feature type="binding site" evidence="1">
    <location>
        <begin position="127"/>
        <end position="135"/>
    </location>
    <ligand>
        <name>ATP</name>
        <dbReference type="ChEBI" id="CHEBI:30616"/>
    </ligand>
</feature>
<feature type="binding site" evidence="1">
    <location>
        <position position="149"/>
    </location>
    <ligand>
        <name>ATP</name>
        <dbReference type="ChEBI" id="CHEBI:30616"/>
    </ligand>
</feature>
<comment type="function">
    <text evidence="1">Is probably a protein kinase regulator of UbiI activity which is involved in aerobic coenzyme Q (ubiquinone) biosynthesis.</text>
</comment>
<comment type="pathway">
    <text>Cofactor biosynthesis; ubiquinone biosynthesis [regulation].</text>
</comment>
<comment type="subcellular location">
    <subcellularLocation>
        <location evidence="1">Cell inner membrane</location>
        <topology evidence="1">Multi-pass membrane protein</topology>
    </subcellularLocation>
</comment>
<comment type="similarity">
    <text evidence="1">Belongs to the ABC1 family. UbiB subfamily.</text>
</comment>
<proteinExistence type="inferred from homology"/>
<keyword id="KW-0067">ATP-binding</keyword>
<keyword id="KW-0997">Cell inner membrane</keyword>
<keyword id="KW-1003">Cell membrane</keyword>
<keyword id="KW-0418">Kinase</keyword>
<keyword id="KW-0472">Membrane</keyword>
<keyword id="KW-0547">Nucleotide-binding</keyword>
<keyword id="KW-0808">Transferase</keyword>
<keyword id="KW-0812">Transmembrane</keyword>
<keyword id="KW-1133">Transmembrane helix</keyword>
<keyword id="KW-0831">Ubiquinone biosynthesis</keyword>
<gene>
    <name evidence="1" type="primary">ubiB</name>
    <name type="ordered locus">Maqu_3417</name>
</gene>
<protein>
    <recommendedName>
        <fullName evidence="1">Probable protein kinase UbiB</fullName>
        <ecNumber evidence="1">2.7.-.-</ecNumber>
    </recommendedName>
    <alternativeName>
        <fullName evidence="1">Ubiquinone biosynthesis protein UbiB</fullName>
    </alternativeName>
</protein>
<dbReference type="EC" id="2.7.-.-" evidence="1"/>
<dbReference type="EMBL" id="CP000514">
    <property type="protein sequence ID" value="ABM20488.1"/>
    <property type="molecule type" value="Genomic_DNA"/>
</dbReference>
<dbReference type="RefSeq" id="WP_011786829.1">
    <property type="nucleotide sequence ID" value="NC_008740.1"/>
</dbReference>
<dbReference type="SMR" id="A1U669"/>
<dbReference type="STRING" id="351348.Maqu_3417"/>
<dbReference type="KEGG" id="maq:Maqu_3417"/>
<dbReference type="eggNOG" id="COG0661">
    <property type="taxonomic scope" value="Bacteria"/>
</dbReference>
<dbReference type="HOGENOM" id="CLU_006533_0_0_6"/>
<dbReference type="OrthoDB" id="9795390at2"/>
<dbReference type="UniPathway" id="UPA00232"/>
<dbReference type="Proteomes" id="UP000000998">
    <property type="component" value="Chromosome"/>
</dbReference>
<dbReference type="GO" id="GO:0005886">
    <property type="term" value="C:plasma membrane"/>
    <property type="evidence" value="ECO:0007669"/>
    <property type="project" value="UniProtKB-SubCell"/>
</dbReference>
<dbReference type="GO" id="GO:0005524">
    <property type="term" value="F:ATP binding"/>
    <property type="evidence" value="ECO:0007669"/>
    <property type="project" value="UniProtKB-KW"/>
</dbReference>
<dbReference type="GO" id="GO:0004672">
    <property type="term" value="F:protein kinase activity"/>
    <property type="evidence" value="ECO:0007669"/>
    <property type="project" value="UniProtKB-UniRule"/>
</dbReference>
<dbReference type="GO" id="GO:0010795">
    <property type="term" value="P:regulation of ubiquinone biosynthetic process"/>
    <property type="evidence" value="ECO:0007669"/>
    <property type="project" value="UniProtKB-UniRule"/>
</dbReference>
<dbReference type="GO" id="GO:0006744">
    <property type="term" value="P:ubiquinone biosynthetic process"/>
    <property type="evidence" value="ECO:0007669"/>
    <property type="project" value="UniProtKB-UniPathway"/>
</dbReference>
<dbReference type="CDD" id="cd13972">
    <property type="entry name" value="UbiB"/>
    <property type="match status" value="1"/>
</dbReference>
<dbReference type="HAMAP" id="MF_00414">
    <property type="entry name" value="UbiB"/>
    <property type="match status" value="1"/>
</dbReference>
<dbReference type="InterPro" id="IPR004147">
    <property type="entry name" value="ABC1_dom"/>
</dbReference>
<dbReference type="InterPro" id="IPR011009">
    <property type="entry name" value="Kinase-like_dom_sf"/>
</dbReference>
<dbReference type="InterPro" id="IPR010232">
    <property type="entry name" value="UbiB"/>
</dbReference>
<dbReference type="InterPro" id="IPR045308">
    <property type="entry name" value="UbiB_bact"/>
</dbReference>
<dbReference type="InterPro" id="IPR050154">
    <property type="entry name" value="UbiB_kinase"/>
</dbReference>
<dbReference type="NCBIfam" id="NF003404">
    <property type="entry name" value="PRK04750.1"/>
    <property type="match status" value="1"/>
</dbReference>
<dbReference type="NCBIfam" id="TIGR01982">
    <property type="entry name" value="UbiB"/>
    <property type="match status" value="1"/>
</dbReference>
<dbReference type="PANTHER" id="PTHR10566">
    <property type="entry name" value="CHAPERONE-ACTIVITY OF BC1 COMPLEX CABC1 -RELATED"/>
    <property type="match status" value="1"/>
</dbReference>
<dbReference type="PANTHER" id="PTHR10566:SF113">
    <property type="entry name" value="PROTEIN ACTIVITY OF BC1 COMPLEX KINASE 7, CHLOROPLASTIC"/>
    <property type="match status" value="1"/>
</dbReference>
<dbReference type="Pfam" id="PF03109">
    <property type="entry name" value="ABC1"/>
    <property type="match status" value="1"/>
</dbReference>
<dbReference type="SUPFAM" id="SSF56112">
    <property type="entry name" value="Protein kinase-like (PK-like)"/>
    <property type="match status" value="1"/>
</dbReference>
<name>UBIB_MARN8</name>
<organism>
    <name type="scientific">Marinobacter nauticus (strain ATCC 700491 / DSM 11845 / VT8)</name>
    <name type="common">Marinobacter aquaeolei</name>
    <dbReference type="NCBI Taxonomy" id="351348"/>
    <lineage>
        <taxon>Bacteria</taxon>
        <taxon>Pseudomonadati</taxon>
        <taxon>Pseudomonadota</taxon>
        <taxon>Gammaproteobacteria</taxon>
        <taxon>Pseudomonadales</taxon>
        <taxon>Marinobacteraceae</taxon>
        <taxon>Marinobacter</taxon>
    </lineage>
</organism>